<feature type="initiator methionine" description="Removed" evidence="5 7">
    <location>
        <position position="1"/>
    </location>
</feature>
<feature type="chain" id="PRO_0000135239" description="Signal recognition particle subunit SRP21">
    <location>
        <begin position="2"/>
        <end position="167"/>
    </location>
</feature>
<feature type="region of interest" description="Disordered" evidence="2">
    <location>
        <begin position="123"/>
        <end position="167"/>
    </location>
</feature>
<feature type="compositionally biased region" description="Basic and acidic residues" evidence="2">
    <location>
        <begin position="123"/>
        <end position="139"/>
    </location>
</feature>
<feature type="compositionally biased region" description="Basic residues" evidence="2">
    <location>
        <begin position="154"/>
        <end position="167"/>
    </location>
</feature>
<feature type="modified residue" description="N-acetylserine" evidence="5 7">
    <location>
        <position position="2"/>
    </location>
</feature>
<proteinExistence type="evidence at protein level"/>
<keyword id="KW-0007">Acetylation</keyword>
<keyword id="KW-0963">Cytoplasm</keyword>
<keyword id="KW-0903">Direct protein sequencing</keyword>
<keyword id="KW-0539">Nucleus</keyword>
<keyword id="KW-1185">Reference proteome</keyword>
<keyword id="KW-0687">Ribonucleoprotein</keyword>
<keyword id="KW-0694">RNA-binding</keyword>
<keyword id="KW-0733">Signal recognition particle</keyword>
<reference key="1">
    <citation type="journal article" date="1992" name="Yeast">
        <title>Sequence of a segment of yeast chromosome XI identifies a new mitochondrial carrier, a new member of the G protein family, and a protein with the PAAKK motif of the H1 histones.</title>
        <authorList>
            <person name="Colleaux L."/>
            <person name="Richard G.-F."/>
            <person name="Thierry A."/>
            <person name="Dujon B."/>
        </authorList>
    </citation>
    <scope>NUCLEOTIDE SEQUENCE [GENOMIC DNA]</scope>
</reference>
<reference key="2">
    <citation type="journal article" date="1994" name="Nature">
        <title>Complete DNA sequence of yeast chromosome XI.</title>
        <authorList>
            <person name="Dujon B."/>
            <person name="Alexandraki D."/>
            <person name="Andre B."/>
            <person name="Ansorge W."/>
            <person name="Baladron V."/>
            <person name="Ballesta J.P.G."/>
            <person name="Banrevi A."/>
            <person name="Bolle P.-A."/>
            <person name="Bolotin-Fukuhara M."/>
            <person name="Bossier P."/>
            <person name="Bou G."/>
            <person name="Boyer J."/>
            <person name="Buitrago M.J."/>
            <person name="Cheret G."/>
            <person name="Colleaux L."/>
            <person name="Daignan-Fornier B."/>
            <person name="del Rey F."/>
            <person name="Dion C."/>
            <person name="Domdey H."/>
            <person name="Duesterhoeft A."/>
            <person name="Duesterhus S."/>
            <person name="Entian K.-D."/>
            <person name="Erfle H."/>
            <person name="Esteban P.F."/>
            <person name="Feldmann H."/>
            <person name="Fernandes L."/>
            <person name="Fobo G.M."/>
            <person name="Fritz C."/>
            <person name="Fukuhara H."/>
            <person name="Gabel C."/>
            <person name="Gaillon L."/>
            <person name="Garcia-Cantalejo J.M."/>
            <person name="Garcia-Ramirez J.J."/>
            <person name="Gent M.E."/>
            <person name="Ghazvini M."/>
            <person name="Goffeau A."/>
            <person name="Gonzalez A."/>
            <person name="Grothues D."/>
            <person name="Guerreiro P."/>
            <person name="Hegemann J.H."/>
            <person name="Hewitt N."/>
            <person name="Hilger F."/>
            <person name="Hollenberg C.P."/>
            <person name="Horaitis O."/>
            <person name="Indge K.J."/>
            <person name="Jacquier A."/>
            <person name="James C.M."/>
            <person name="Jauniaux J.-C."/>
            <person name="Jimenez A."/>
            <person name="Keuchel H."/>
            <person name="Kirchrath L."/>
            <person name="Kleine K."/>
            <person name="Koetter P."/>
            <person name="Legrain P."/>
            <person name="Liebl S."/>
            <person name="Louis E.J."/>
            <person name="Maia e Silva A."/>
            <person name="Marck C."/>
            <person name="Monnier A.-L."/>
            <person name="Moestl D."/>
            <person name="Mueller S."/>
            <person name="Obermaier B."/>
            <person name="Oliver S.G."/>
            <person name="Pallier C."/>
            <person name="Pascolo S."/>
            <person name="Pfeiffer F."/>
            <person name="Philippsen P."/>
            <person name="Planta R.J."/>
            <person name="Pohl F.M."/>
            <person name="Pohl T.M."/>
            <person name="Poehlmann R."/>
            <person name="Portetelle D."/>
            <person name="Purnelle B."/>
            <person name="Puzos V."/>
            <person name="Ramezani Rad M."/>
            <person name="Rasmussen S.W."/>
            <person name="Remacha M.A."/>
            <person name="Revuelta J.L."/>
            <person name="Richard G.-F."/>
            <person name="Rieger M."/>
            <person name="Rodrigues-Pousada C."/>
            <person name="Rose M."/>
            <person name="Rupp T."/>
            <person name="Santos M.A."/>
            <person name="Schwager C."/>
            <person name="Sensen C."/>
            <person name="Skala J."/>
            <person name="Soares H."/>
            <person name="Sor F."/>
            <person name="Stegemann J."/>
            <person name="Tettelin H."/>
            <person name="Thierry A."/>
            <person name="Tzermia M."/>
            <person name="Urrestarazu L.A."/>
            <person name="van Dyck L."/>
            <person name="van Vliet-Reedijk J.C."/>
            <person name="Valens M."/>
            <person name="Vandenbol M."/>
            <person name="Vilela C."/>
            <person name="Vissers S."/>
            <person name="von Wettstein D."/>
            <person name="Voss H."/>
            <person name="Wiemann S."/>
            <person name="Xu G."/>
            <person name="Zimmermann J."/>
            <person name="Haasemann M."/>
            <person name="Becker I."/>
            <person name="Mewes H.-W."/>
        </authorList>
    </citation>
    <scope>NUCLEOTIDE SEQUENCE [LARGE SCALE GENOMIC DNA]</scope>
    <source>
        <strain>ATCC 204508 / S288c</strain>
    </source>
</reference>
<reference key="3">
    <citation type="journal article" date="2014" name="G3 (Bethesda)">
        <title>The reference genome sequence of Saccharomyces cerevisiae: Then and now.</title>
        <authorList>
            <person name="Engel S.R."/>
            <person name="Dietrich F.S."/>
            <person name="Fisk D.G."/>
            <person name="Binkley G."/>
            <person name="Balakrishnan R."/>
            <person name="Costanzo M.C."/>
            <person name="Dwight S.S."/>
            <person name="Hitz B.C."/>
            <person name="Karra K."/>
            <person name="Nash R.S."/>
            <person name="Weng S."/>
            <person name="Wong E.D."/>
            <person name="Lloyd P."/>
            <person name="Skrzypek M.S."/>
            <person name="Miyasato S.R."/>
            <person name="Simison M."/>
            <person name="Cherry J.M."/>
        </authorList>
    </citation>
    <scope>GENOME REANNOTATION</scope>
    <source>
        <strain>ATCC 204508 / S288c</strain>
    </source>
</reference>
<reference key="4">
    <citation type="journal article" date="2007" name="Genome Res.">
        <title>Approaching a complete repository of sequence-verified protein-encoding clones for Saccharomyces cerevisiae.</title>
        <authorList>
            <person name="Hu Y."/>
            <person name="Rolfs A."/>
            <person name="Bhullar B."/>
            <person name="Murthy T.V.S."/>
            <person name="Zhu C."/>
            <person name="Berger M.F."/>
            <person name="Camargo A.A."/>
            <person name="Kelley F."/>
            <person name="McCarron S."/>
            <person name="Jepson D."/>
            <person name="Richardson A."/>
            <person name="Raphael J."/>
            <person name="Moreira D."/>
            <person name="Taycher E."/>
            <person name="Zuo D."/>
            <person name="Mohr S."/>
            <person name="Kane M.F."/>
            <person name="Williamson J."/>
            <person name="Simpson A.J.G."/>
            <person name="Bulyk M.L."/>
            <person name="Harlow E."/>
            <person name="Marsischky G."/>
            <person name="Kolodner R.D."/>
            <person name="LaBaer J."/>
        </authorList>
    </citation>
    <scope>NUCLEOTIDE SEQUENCE [GENOMIC DNA]</scope>
    <source>
        <strain>ATCC 204508 / S288c</strain>
    </source>
</reference>
<reference key="5">
    <citation type="journal article" date="1994" name="EMBO J.">
        <title>Subunits of the Saccharomyces cerevisiae signal recognition particle required for its functional expression.</title>
        <authorList>
            <person name="Brown J.D."/>
            <person name="Hann B.C."/>
            <person name="Medzihradszky K.F."/>
            <person name="Niwa M."/>
            <person name="Burlingame A.L."/>
            <person name="Walter P."/>
        </authorList>
    </citation>
    <scope>PROTEIN SEQUENCE OF 2-15; 45-55; 75-85 AND 107-120</scope>
    <scope>IDENTIFICATION IN THE SRP COMPLEX</scope>
    <scope>ACETYLATION AT SER-2</scope>
    <source>
        <strain>ATCC 204508 / S288c</strain>
    </source>
</reference>
<reference key="6">
    <citation type="journal article" date="1996" name="J. Cell Biol.">
        <title>Signal sequences specify the targeting route to the endoplasmic reticulum membrane.</title>
        <authorList>
            <person name="Ng D.T."/>
            <person name="Brown J.D."/>
            <person name="Walter P."/>
        </authorList>
    </citation>
    <scope>FUNCTION OF THE SRP COMPLEX</scope>
</reference>
<reference key="7">
    <citation type="journal article" date="2001" name="J. Cell Biol.">
        <title>Biogenesis of the signal recognition particle (SRP) involves import of SRP proteins into the nucleolus, assembly with the SRP-RNA, and Xpo1p-mediated export.</title>
        <authorList>
            <person name="Grosshans H."/>
            <person name="Deinert K."/>
            <person name="Hurt E.C."/>
            <person name="Simos G."/>
        </authorList>
    </citation>
    <scope>ASSEMBLY OF THE SRP COMPLEX</scope>
    <scope>SUBCELLULAR LOCATION</scope>
</reference>
<reference key="8">
    <citation type="journal article" date="2003" name="Nature">
        <title>Global analysis of protein expression in yeast.</title>
        <authorList>
            <person name="Ghaemmaghami S."/>
            <person name="Huh W.-K."/>
            <person name="Bower K."/>
            <person name="Howson R.W."/>
            <person name="Belle A."/>
            <person name="Dephoure N."/>
            <person name="O'Shea E.K."/>
            <person name="Weissman J.S."/>
        </authorList>
    </citation>
    <scope>LEVEL OF PROTEIN EXPRESSION [LARGE SCALE ANALYSIS]</scope>
</reference>
<reference key="9">
    <citation type="journal article" date="2007" name="Proc. Natl. Acad. Sci. U.S.A.">
        <title>Analysis of phosphorylation sites on proteins from Saccharomyces cerevisiae by electron transfer dissociation (ETD) mass spectrometry.</title>
        <authorList>
            <person name="Chi A."/>
            <person name="Huttenhower C."/>
            <person name="Geer L.Y."/>
            <person name="Coon J.J."/>
            <person name="Syka J.E.P."/>
            <person name="Bai D.L."/>
            <person name="Shabanowitz J."/>
            <person name="Burke D.J."/>
            <person name="Troyanskaya O.G."/>
            <person name="Hunt D.F."/>
        </authorList>
    </citation>
    <scope>IDENTIFICATION BY MASS SPECTROMETRY [LARGE SCALE ANALYSIS]</scope>
</reference>
<reference key="10">
    <citation type="journal article" date="2012" name="Proc. Natl. Acad. Sci. U.S.A.">
        <title>N-terminal acetylome analyses and functional insights of the N-terminal acetyltransferase NatB.</title>
        <authorList>
            <person name="Van Damme P."/>
            <person name="Lasa M."/>
            <person name="Polevoda B."/>
            <person name="Gazquez C."/>
            <person name="Elosegui-Artola A."/>
            <person name="Kim D.S."/>
            <person name="De Juan-Pardo E."/>
            <person name="Demeyer K."/>
            <person name="Hole K."/>
            <person name="Larrea E."/>
            <person name="Timmerman E."/>
            <person name="Prieto J."/>
            <person name="Arnesen T."/>
            <person name="Sherman F."/>
            <person name="Gevaert K."/>
            <person name="Aldabe R."/>
        </authorList>
    </citation>
    <scope>ACETYLATION [LARGE SCALE ANALYSIS] AT SER-2</scope>
    <scope>CLEAVAGE OF INITIATOR METHIONINE [LARGE SCALE ANALYSIS]</scope>
    <scope>IDENTIFICATION BY MASS SPECTROMETRY [LARGE SCALE ANALYSIS]</scope>
</reference>
<protein>
    <recommendedName>
        <fullName>Signal recognition particle subunit SRP21</fullName>
    </recommendedName>
    <alternativeName>
        <fullName>Signal recognition particle 21 kDa protein</fullName>
    </alternativeName>
</protein>
<name>SRP21_YEAST</name>
<evidence type="ECO:0000250" key="1"/>
<evidence type="ECO:0000256" key="2">
    <source>
        <dbReference type="SAM" id="MobiDB-lite"/>
    </source>
</evidence>
<evidence type="ECO:0000269" key="3">
    <source>
    </source>
</evidence>
<evidence type="ECO:0000269" key="4">
    <source>
    </source>
</evidence>
<evidence type="ECO:0000269" key="5">
    <source>
    </source>
</evidence>
<evidence type="ECO:0000269" key="6">
    <source>
    </source>
</evidence>
<evidence type="ECO:0007744" key="7">
    <source>
    </source>
</evidence>
<dbReference type="EMBL" id="S44213">
    <property type="protein sequence ID" value="AAB23073.1"/>
    <property type="molecule type" value="Genomic_DNA"/>
</dbReference>
<dbReference type="EMBL" id="Z28122">
    <property type="protein sequence ID" value="CAA81963.1"/>
    <property type="molecule type" value="Genomic_DNA"/>
</dbReference>
<dbReference type="EMBL" id="AY558352">
    <property type="protein sequence ID" value="AAS56678.1"/>
    <property type="molecule type" value="Genomic_DNA"/>
</dbReference>
<dbReference type="EMBL" id="BK006944">
    <property type="protein sequence ID" value="DAA09038.1"/>
    <property type="molecule type" value="Genomic_DNA"/>
</dbReference>
<dbReference type="PIR" id="S25360">
    <property type="entry name" value="S25360"/>
</dbReference>
<dbReference type="RefSeq" id="NP_012800.1">
    <property type="nucleotide sequence ID" value="NM_001179688.1"/>
</dbReference>
<dbReference type="SMR" id="P32342"/>
<dbReference type="BioGRID" id="34013">
    <property type="interactions" value="59"/>
</dbReference>
<dbReference type="ComplexPortal" id="CPX-609">
    <property type="entry name" value="Signal recognition particle"/>
</dbReference>
<dbReference type="DIP" id="DIP-4863N"/>
<dbReference type="FunCoup" id="P32342">
    <property type="interactions" value="73"/>
</dbReference>
<dbReference type="IntAct" id="P32342">
    <property type="interactions" value="31"/>
</dbReference>
<dbReference type="MINT" id="P32342"/>
<dbReference type="STRING" id="4932.YKL122C"/>
<dbReference type="GlyGen" id="P32342">
    <property type="glycosylation" value="1 site"/>
</dbReference>
<dbReference type="iPTMnet" id="P32342"/>
<dbReference type="PaxDb" id="4932-YKL122C"/>
<dbReference type="PeptideAtlas" id="P32342"/>
<dbReference type="EnsemblFungi" id="YKL122C_mRNA">
    <property type="protein sequence ID" value="YKL122C"/>
    <property type="gene ID" value="YKL122C"/>
</dbReference>
<dbReference type="GeneID" id="853737"/>
<dbReference type="KEGG" id="sce:YKL122C"/>
<dbReference type="AGR" id="SGD:S000001605"/>
<dbReference type="SGD" id="S000001605">
    <property type="gene designation" value="SRP21"/>
</dbReference>
<dbReference type="VEuPathDB" id="FungiDB:YKL122C"/>
<dbReference type="eggNOG" id="ENOG502S2CK">
    <property type="taxonomic scope" value="Eukaryota"/>
</dbReference>
<dbReference type="HOGENOM" id="CLU_104695_1_0_1"/>
<dbReference type="InParanoid" id="P32342"/>
<dbReference type="OMA" id="EPNSGKC"/>
<dbReference type="OrthoDB" id="5419752at2759"/>
<dbReference type="BioCyc" id="YEAST:G3O-31905-MONOMER"/>
<dbReference type="Reactome" id="R-SCE-1799339">
    <property type="pathway name" value="SRP-dependent cotranslational protein targeting to membrane"/>
</dbReference>
<dbReference type="BioGRID-ORCS" id="853737">
    <property type="hits" value="5 hits in 10 CRISPR screens"/>
</dbReference>
<dbReference type="PRO" id="PR:P32342"/>
<dbReference type="Proteomes" id="UP000002311">
    <property type="component" value="Chromosome XI"/>
</dbReference>
<dbReference type="RNAct" id="P32342">
    <property type="molecule type" value="protein"/>
</dbReference>
<dbReference type="GO" id="GO:0005634">
    <property type="term" value="C:nucleus"/>
    <property type="evidence" value="ECO:0007005"/>
    <property type="project" value="SGD"/>
</dbReference>
<dbReference type="GO" id="GO:0005786">
    <property type="term" value="C:signal recognition particle, endoplasmic reticulum targeting"/>
    <property type="evidence" value="ECO:0000314"/>
    <property type="project" value="SGD"/>
</dbReference>
<dbReference type="GO" id="GO:0003723">
    <property type="term" value="F:RNA binding"/>
    <property type="evidence" value="ECO:0007669"/>
    <property type="project" value="UniProtKB-KW"/>
</dbReference>
<dbReference type="GO" id="GO:0006614">
    <property type="term" value="P:SRP-dependent cotranslational protein targeting to membrane"/>
    <property type="evidence" value="ECO:0000314"/>
    <property type="project" value="SGD"/>
</dbReference>
<dbReference type="GO" id="GO:0006617">
    <property type="term" value="P:SRP-dependent cotranslational protein targeting to membrane, signal sequence recognition"/>
    <property type="evidence" value="ECO:0000303"/>
    <property type="project" value="ComplexPortal"/>
</dbReference>
<dbReference type="InterPro" id="IPR039914">
    <property type="entry name" value="SRP9-like"/>
</dbReference>
<dbReference type="InterPro" id="IPR039432">
    <property type="entry name" value="SRP9_dom"/>
</dbReference>
<dbReference type="PANTHER" id="PTHR12834">
    <property type="entry name" value="SIGNAL RECOGNITION PARTICLE 9 KDA PROTEIN"/>
    <property type="match status" value="1"/>
</dbReference>
<dbReference type="PANTHER" id="PTHR12834:SF12">
    <property type="entry name" value="SIGNAL RECOGNITION PARTICLE 9 KDA PROTEIN"/>
    <property type="match status" value="1"/>
</dbReference>
<dbReference type="Pfam" id="PF05486">
    <property type="entry name" value="SRP9-21"/>
    <property type="match status" value="1"/>
</dbReference>
<sequence length="167" mass="18425">MSVKPIDNYITNSVRLFEVNPSQTLFSISYKPPTQKTDTKVSFRTHNSHLSLNYKFTTNKSKDVSRLLSALGPRGVSITPGKIEKIAQSKKKNNKIKESSKKIKGKSIQDIVGLATLIVNTDVEKSDPAAKKTATEPKQKANAVQNNNGNSAASKKKKNKNKGKKKR</sequence>
<accession>P32342</accession>
<accession>D6VXG8</accession>
<organism>
    <name type="scientific">Saccharomyces cerevisiae (strain ATCC 204508 / S288c)</name>
    <name type="common">Baker's yeast</name>
    <dbReference type="NCBI Taxonomy" id="559292"/>
    <lineage>
        <taxon>Eukaryota</taxon>
        <taxon>Fungi</taxon>
        <taxon>Dikarya</taxon>
        <taxon>Ascomycota</taxon>
        <taxon>Saccharomycotina</taxon>
        <taxon>Saccharomycetes</taxon>
        <taxon>Saccharomycetales</taxon>
        <taxon>Saccharomycetaceae</taxon>
        <taxon>Saccharomyces</taxon>
    </lineage>
</organism>
<gene>
    <name type="primary">SRP21</name>
    <name type="ordered locus">YKL122C</name>
    <name type="ORF">YKL527</name>
</gene>
<comment type="function">
    <text evidence="6">Signal-recognition-particle (SRP) assembly has a crucial role in targeting secretory proteins to the rough endoplasmic reticulum (ER) membrane. SRP is required for the cotranslational protein translocation for ER import and preferentially recognizes strongly hydrophobic signal sequences. It is involved in targeting the nascent chain-ribosome (RNC) complex to the ER and is proposed to participate in the arrest of nascent chain elongation during membrane targeting.</text>
</comment>
<comment type="subunit">
    <text evidence="5">Fungal signal recognition particle (SRP) complex consists of a 7S RNA molecule (scR1) and at least six protein subunits: SRP72, SRP68, SRP54, SEC65, SRP21 and SRP14. At least SRP14, SRP21, SRP68 and SRP72 are proposed to get assembled together with scR1 RNA as a pre-SRP complex in the nucleolus which is exported to the cytoplasm.</text>
</comment>
<comment type="interaction">
    <interactant intactId="EBI-17984">
        <id>P32342</id>
    </interactant>
    <interactant intactId="EBI-16641">
        <id>P29478</id>
        <label>SEC65</label>
    </interactant>
    <organismsDiffer>false</organismsDiffer>
    <experiments>6</experiments>
</comment>
<comment type="subcellular location">
    <subcellularLocation>
        <location evidence="1">Cytoplasm</location>
    </subcellularLocation>
    <subcellularLocation>
        <location evidence="3">Nucleus</location>
    </subcellularLocation>
</comment>
<comment type="miscellaneous">
    <text evidence="4">Present with 3400 molecules/cell in log phase SD medium.</text>
</comment>